<organism>
    <name type="scientific">Zaire ebolavirus (strain Mayinga-76)</name>
    <name type="common">ZEBOV</name>
    <name type="synonym">Zaire Ebola virus</name>
    <dbReference type="NCBI Taxonomy" id="128952"/>
    <lineage>
        <taxon>Viruses</taxon>
        <taxon>Riboviria</taxon>
        <taxon>Orthornavirae</taxon>
        <taxon>Negarnaviricota</taxon>
        <taxon>Haploviricotina</taxon>
        <taxon>Monjiviricetes</taxon>
        <taxon>Mononegavirales</taxon>
        <taxon>Filoviridae</taxon>
        <taxon>Orthoebolavirus</taxon>
        <taxon>Orthoebolavirus zairense</taxon>
        <taxon>Zaire ebolavirus</taxon>
    </lineage>
</organism>
<sequence length="298" mass="33520">MGVTGILQLPRDRFKRTSFFLWVIILFQRTFSIPLGVIHNSTLQVSDVDKLVCRDKLSSTNQLRSVGLNLEGNGVATDVPSATKRWGFRSGVPPKVVNYEAGEWAENCYNLEIKKPDGSECLPAAPDGIRGFPRCRYVHKVSGTGPCAGDFAFHKEGAFFLYDRLASTVIYRGTTFAEGVVAFLILPQAKKDFFSSHPLREPVNATEDPSSGYYSTTIRYQATGFGTNETEYLFEVDNLTYVQLESRFTPQFLLQLNETIYTSGKRSNTTGKLIWKVNPEIDTTIGEWAFWETKKKPH</sequence>
<organismHost>
    <name type="scientific">Epomops franqueti</name>
    <name type="common">Franquet's epauletted fruit bat</name>
    <name type="synonym">Epomophorus franqueti</name>
    <dbReference type="NCBI Taxonomy" id="77231"/>
</organismHost>
<organismHost>
    <name type="scientific">Homo sapiens</name>
    <name type="common">Human</name>
    <dbReference type="NCBI Taxonomy" id="9606"/>
</organismHost>
<organismHost>
    <name type="scientific">Myonycteris torquata</name>
    <name type="common">Little collared fruit bat</name>
    <dbReference type="NCBI Taxonomy" id="77243"/>
</organismHost>
<feature type="signal peptide" evidence="2">
    <location>
        <begin position="1"/>
        <end position="32"/>
    </location>
</feature>
<feature type="chain" id="PRO_0000391494" description="Super small secreted glycoprotein">
    <location>
        <begin position="33"/>
        <end position="298"/>
    </location>
</feature>
<feature type="glycosylation site" description="N-linked (GlcNAc...) asparagine; by host" evidence="2">
    <location>
        <position position="40"/>
    </location>
</feature>
<feature type="glycosylation site" description="N-linked (GlcNAc...) asparagine; by host" evidence="2">
    <location>
        <position position="204"/>
    </location>
</feature>
<feature type="glycosylation site" description="N-linked (GlcNAc...) asparagine; by host" evidence="2">
    <location>
        <position position="228"/>
    </location>
</feature>
<feature type="glycosylation site" description="N-linked (GlcNAc...) asparagine; by host" evidence="2">
    <location>
        <position position="238"/>
    </location>
</feature>
<feature type="glycosylation site" description="N-linked (GlcNAc...) asparagine; by host" evidence="2">
    <location>
        <position position="257"/>
    </location>
</feature>
<feature type="glycosylation site" description="N-linked (GlcNAc...) asparagine; by host" evidence="2">
    <location>
        <position position="268"/>
    </location>
</feature>
<feature type="disulfide bond" description="Interchain" evidence="1">
    <location>
        <position position="53"/>
    </location>
</feature>
<feature type="disulfide bond" evidence="1">
    <location>
        <begin position="108"/>
        <end position="135"/>
    </location>
</feature>
<feature type="disulfide bond" evidence="1">
    <location>
        <begin position="121"/>
        <end position="147"/>
    </location>
</feature>
<keyword id="KW-1015">Disulfide bond</keyword>
<keyword id="KW-0325">Glycoprotein</keyword>
<keyword id="KW-1185">Reference proteome</keyword>
<keyword id="KW-0691">RNA editing</keyword>
<keyword id="KW-0964">Secreted</keyword>
<keyword id="KW-0732">Signal</keyword>
<gene>
    <name type="primary">GP</name>
</gene>
<accession>Q9YMG2</accession>
<proteinExistence type="inferred from homology"/>
<protein>
    <recommendedName>
        <fullName>Super small secreted glycoprotein</fullName>
        <shortName>SsGP</shortName>
    </recommendedName>
</protein>
<evidence type="ECO:0000250" key="1"/>
<evidence type="ECO:0000255" key="2"/>
<evidence type="ECO:0000269" key="3">
    <source>
    </source>
</evidence>
<evidence type="ECO:0000305" key="4"/>
<comment type="subcellular location">
    <subcellularLocation>
        <location evidence="3">Secreted</location>
    </subcellularLocation>
</comment>
<comment type="RNA editing">
    <location>
        <position position="295"/>
    </location>
    <text>Partially edited. RNA editing at this position consists of an insertion of one or two adenine nucleotides. The sequence displayed here is the super small secreted glycoprotein ssGP, derived from the +2A edited RNA. The unedited RNA gives rise to the small secreted glycoprotein sGP (AC P60170), the +1A edited RNA gives rise to the full-length transmembrane glycoprotein GP (AC Q05320).</text>
</comment>
<comment type="similarity">
    <text evidence="4">Belongs to the filoviruses glycoprotein family.</text>
</comment>
<comment type="sequence caution" evidence="4">
    <conflict type="erroneous translation">
        <sequence resource="EMBL-CDS" id="AAD14586"/>
    </conflict>
    <text>A lysine is missing at the editing site.</text>
</comment>
<comment type="sequence caution" evidence="4">
    <conflict type="erroneous translation">
        <sequence resource="EMBL-CDS" id="ABX75369"/>
    </conflict>
    <text>A lysine is missing at the editing site.</text>
</comment>
<dbReference type="EMBL" id="AF086833">
    <property type="protein sequence ID" value="AAD14586.1"/>
    <property type="status" value="ALT_SEQ"/>
    <property type="molecule type" value="Genomic_RNA"/>
</dbReference>
<dbReference type="EMBL" id="EU224440">
    <property type="protein sequence ID" value="ABX75369.1"/>
    <property type="status" value="ALT_SEQ"/>
    <property type="molecule type" value="Viral_cRNA"/>
</dbReference>
<dbReference type="RefSeq" id="NP_066248.1">
    <property type="nucleotide sequence ID" value="NC_002549.1"/>
</dbReference>
<dbReference type="SMR" id="Q9YMG2"/>
<dbReference type="GlyCosmos" id="Q9YMG2">
    <property type="glycosylation" value="6 sites, No reported glycans"/>
</dbReference>
<dbReference type="DNASU" id="911829"/>
<dbReference type="GeneID" id="911829"/>
<dbReference type="Proteomes" id="UP000007209">
    <property type="component" value="Genome"/>
</dbReference>
<dbReference type="Proteomes" id="UP000116327">
    <property type="component" value="Genome"/>
</dbReference>
<dbReference type="GO" id="GO:0005576">
    <property type="term" value="C:extracellular region"/>
    <property type="evidence" value="ECO:0007669"/>
    <property type="project" value="UniProtKB-SubCell"/>
</dbReference>
<dbReference type="InterPro" id="IPR002561">
    <property type="entry name" value="GPC_filovir-type_extra_dom"/>
</dbReference>
<dbReference type="Pfam" id="PF01611">
    <property type="entry name" value="Filo_glycop"/>
    <property type="match status" value="1"/>
</dbReference>
<name>VSSGP_EBOZM</name>
<reference key="1">
    <citation type="journal article" date="1998" name="Proc. Natl. Acad. Sci. U.S.A.">
        <title>Processing of the Ebola virus glycoprotein by the proprotein convertase furin.</title>
        <authorList>
            <person name="Volchkov V.E."/>
            <person name="Feldmann H."/>
            <person name="Volchkova V.A."/>
            <person name="Klenk H.-D."/>
        </authorList>
    </citation>
    <scope>NUCLEOTIDE SEQUENCE [GENOMIC RNA]</scope>
    <source>
        <strain>Mayinga</strain>
    </source>
</reference>
<reference key="2">
    <citation type="journal article" date="1993" name="FEBS Lett.">
        <title>The VP35 and VP40 proteins of filoviruses. Homology between Marburg and Ebola viruses.</title>
        <authorList>
            <person name="Bukreyev A.A."/>
            <person name="Volchkov V.E."/>
            <person name="Blinov V.M."/>
            <person name="Netesov S.V."/>
        </authorList>
    </citation>
    <scope>NUCLEOTIDE SEQUENCE [GENOMIC RNA]</scope>
    <source>
        <strain>Mayinga</strain>
    </source>
</reference>
<reference key="3">
    <citation type="journal article" date="1995" name="Virology">
        <title>GP mRNA of Ebola virus is edited by the Ebola virus polymerase and by T7 and vaccinia virus polymerases.</title>
        <authorList>
            <person name="Volchkov V.E."/>
            <person name="Becker S."/>
            <person name="Volchkova V.A."/>
            <person name="Ternovoj V.A."/>
            <person name="Kotov A.N."/>
            <person name="Netesov S.V."/>
            <person name="Klenk H.-D."/>
        </authorList>
    </citation>
    <scope>NUCLEOTIDE SEQUENCE [GENOMIC RNA]</scope>
    <source>
        <strain>Mayinga</strain>
    </source>
</reference>
<reference key="4">
    <citation type="journal article" date="1998" name="Virology">
        <title>Release of viral glycoproteins during Ebola virus infection.</title>
        <authorList>
            <person name="Volchkov V.E."/>
            <person name="Volchkova V.A."/>
            <person name="Slenczka W."/>
            <person name="Klenk H.-D."/>
            <person name="Feldmann H."/>
        </authorList>
    </citation>
    <scope>NUCLEOTIDE SEQUENCE [GENOMIC RNA]</scope>
    <source>
        <strain>Mayinga</strain>
    </source>
</reference>
<reference key="5">
    <citation type="journal article" date="1998" name="Virology">
        <title>The nonstructural small glycoprotein sGP of Ebola virus is secreted as an antiparallel-orientated homodimer.</title>
        <authorList>
            <person name="Volchkova V.A."/>
            <person name="Feldmann H."/>
            <person name="Klenk H.D."/>
            <person name="Volchkov V.E."/>
        </authorList>
    </citation>
    <scope>SUBCELLULAR LOCATION</scope>
</reference>
<reference key="6">
    <citation type="journal article" date="1999" name="J. Gen. Virol.">
        <title>Characterization of the L gene and 5' trailer region of Ebola virus.</title>
        <authorList>
            <person name="Volchkov V.E."/>
            <person name="Volchkova V.A."/>
            <person name="Chepurnov A.A."/>
            <person name="Blinov V.M."/>
            <person name="Netesov S.V."/>
            <person name="Feldmann H."/>
        </authorList>
    </citation>
    <scope>NUCLEOTIDE SEQUENCE [GENOMIC RNA]</scope>
    <source>
        <strain>Mayinga</strain>
    </source>
</reference>
<reference key="7">
    <citation type="submission" date="2000-06" db="EMBL/GenBank/DDBJ databases">
        <authorList>
            <person name="Volchkov V.E."/>
        </authorList>
    </citation>
    <scope>NUCLEOTIDE SEQUENCE [GENOMIC RNA]</scope>
    <source>
        <strain>Mayinga</strain>
    </source>
</reference>
<reference key="8">
    <citation type="submission" date="2007-10" db="EMBL/GenBank/DDBJ databases">
        <title>Experimental study of molecular determinants of Ebola virus virulence in guinea pigs.</title>
        <authorList>
            <person name="Subbotina E.L."/>
            <person name="Kachko A.V."/>
            <person name="Dadaeva A.A."/>
            <person name="Chepurnov A.A."/>
        </authorList>
    </citation>
    <scope>NUCLEOTIDE SEQUENCE [GENOMIC RNA]</scope>
    <source>
        <strain>Mayinga</strain>
    </source>
</reference>